<comment type="function">
    <text evidence="1">May regulate endocytosis by recruiting RSP5 ubiquitin ligase activity to specific plasma membrane proteins in response to extracellular stimuli.</text>
</comment>
<comment type="subunit">
    <text evidence="1">Interacts with RSP5.</text>
</comment>
<comment type="subcellular location">
    <subcellularLocation>
        <location evidence="1">Cytoplasm</location>
    </subcellularLocation>
</comment>
<comment type="PTM">
    <text evidence="1">Ubiquitinated by RSP5.</text>
</comment>
<comment type="similarity">
    <text evidence="3">Belongs to the ART10 family.</text>
</comment>
<name>ART10_YEAS2</name>
<sequence>MAPKISISLNPPYNGEFYSSNDQMSGIVSLQLTKALSIRKISVILKGFSETLTKIDQEYMFQQNGMMMPGQDNKSFHTLMKFEQRVFPPDNVWNALDGSSKPFKVKPGSYNYSFQFDKFPRKPECLKNHTAKTVAFVTRNNARLPPTFNSHWQEFNKIDNLDLYFYSFGKVIYMVQVQIELGKSSSWFKPFHKLIREIETFEFIPEPKDLIVEPDEDDNEELNAFSNNSRGNSLVTNNEFFNSSNLKVPSKDVKVVNGVGYIKSDRNFSQANSILIENGDIRSRPVSSVTSTRQSTRLVNGMKVFPSTYKMGLPDGESNMRIEVRSRDLKQIYRKDYLFRSGSQNFDKVYVVMEGNIASLSKMQITPLKLQLNLLETTTYLSQGIANGNYSSLKLIEIDLNQLKSNKPLLDLNEIRENFDGSMFECELRLKDHPILRKLVFNEEDYRHRGNRLYSFKTCTIKRIFSLQLLIEWGINGIRKQSEVNIDPVQIFCQVREHVEAEALPRYVPPPTYTEMAS</sequence>
<dbReference type="EMBL" id="ACFL01000434">
    <property type="protein sequence ID" value="EEU04461.1"/>
    <property type="molecule type" value="Genomic_DNA"/>
</dbReference>
<dbReference type="Proteomes" id="UP000008073">
    <property type="component" value="Unassembled WGS sequence"/>
</dbReference>
<dbReference type="GO" id="GO:0005737">
    <property type="term" value="C:cytoplasm"/>
    <property type="evidence" value="ECO:0007669"/>
    <property type="project" value="UniProtKB-SubCell"/>
</dbReference>
<dbReference type="GO" id="GO:0006897">
    <property type="term" value="P:endocytosis"/>
    <property type="evidence" value="ECO:0007669"/>
    <property type="project" value="UniProtKB-KW"/>
</dbReference>
<dbReference type="CDD" id="cd22952">
    <property type="entry name" value="ART10-like"/>
    <property type="match status" value="1"/>
</dbReference>
<dbReference type="FunFam" id="2.60.40.640:FF:000038">
    <property type="entry name" value="Arrestin-related trafficking adapter 10"/>
    <property type="match status" value="1"/>
</dbReference>
<dbReference type="Gene3D" id="2.60.40.640">
    <property type="match status" value="1"/>
</dbReference>
<dbReference type="InterPro" id="IPR014752">
    <property type="entry name" value="Arrestin-like_C"/>
</dbReference>
<feature type="chain" id="PRO_0000402195" description="Arrestin-related trafficking adapter 10">
    <location>
        <begin position="1"/>
        <end position="518"/>
    </location>
</feature>
<feature type="cross-link" description="Glycyl lysine isopeptide (Lys-Gly) (interchain with G-Cter in ubiquitin)" evidence="2">
    <location>
        <position position="118"/>
    </location>
</feature>
<proteinExistence type="inferred from homology"/>
<gene>
    <name type="primary">ART10</name>
    <name type="ORF">C1Q_05259</name>
</gene>
<keyword id="KW-0963">Cytoplasm</keyword>
<keyword id="KW-0254">Endocytosis</keyword>
<keyword id="KW-1017">Isopeptide bond</keyword>
<keyword id="KW-0832">Ubl conjugation</keyword>
<reference key="1">
    <citation type="journal article" date="2009" name="Genome Res.">
        <title>Genome structure of a Saccharomyces cerevisiae strain widely used in bioethanol production.</title>
        <authorList>
            <person name="Argueso J.L."/>
            <person name="Carazzolle M.F."/>
            <person name="Mieczkowski P.A."/>
            <person name="Duarte F.M."/>
            <person name="Netto O.V.C."/>
            <person name="Missawa S.K."/>
            <person name="Galzerani F."/>
            <person name="Costa G.G.L."/>
            <person name="Vidal R.O."/>
            <person name="Noronha M.F."/>
            <person name="Dominska M."/>
            <person name="Andrietta M.G.S."/>
            <person name="Andrietta S.R."/>
            <person name="Cunha A.F."/>
            <person name="Gomes L.H."/>
            <person name="Tavares F.C.A."/>
            <person name="Alcarde A.R."/>
            <person name="Dietrich F.S."/>
            <person name="McCusker J.H."/>
            <person name="Petes T.D."/>
            <person name="Pereira G.A.G."/>
        </authorList>
    </citation>
    <scope>NUCLEOTIDE SEQUENCE [LARGE SCALE GENOMIC DNA]</scope>
    <source>
        <strain>JAY291</strain>
    </source>
</reference>
<protein>
    <recommendedName>
        <fullName>Arrestin-related trafficking adapter 10</fullName>
    </recommendedName>
</protein>
<evidence type="ECO:0000250" key="1"/>
<evidence type="ECO:0000250" key="2">
    <source>
        <dbReference type="UniProtKB" id="P18634"/>
    </source>
</evidence>
<evidence type="ECO:0000305" key="3"/>
<organism>
    <name type="scientific">Saccharomyces cerevisiae (strain JAY291)</name>
    <name type="common">Baker's yeast</name>
    <dbReference type="NCBI Taxonomy" id="574961"/>
    <lineage>
        <taxon>Eukaryota</taxon>
        <taxon>Fungi</taxon>
        <taxon>Dikarya</taxon>
        <taxon>Ascomycota</taxon>
        <taxon>Saccharomycotina</taxon>
        <taxon>Saccharomycetes</taxon>
        <taxon>Saccharomycetales</taxon>
        <taxon>Saccharomycetaceae</taxon>
        <taxon>Saccharomyces</taxon>
    </lineage>
</organism>
<accession>C7GXJ6</accession>